<sequence length="196" mass="22714">MSRYRGPRLKKIRRLGALPGLTRKTPKSGSNQKKKFNSGKKEQYRIRLQEKQKLRFHYGLTERQLLRYVHIAGKAKRSTGQVLLQLLEMRLDNILFRLGMASTIPGARQLVNHRHILVNGRIVDIPSFRCKPRDIITTKDNQRSKRLVQNSIASSDPANLPKHLTVDTLQYKGLVKKILDRKWVGLKVNELLVVEY</sequence>
<comment type="function">
    <text evidence="1">One of the primary rRNA binding proteins, it binds directly to 16S rRNA where it nucleates assembly of the body of the 30S subunit.</text>
</comment>
<comment type="function">
    <text evidence="1">With S5 and S12 plays an important role in translational accuracy.</text>
</comment>
<comment type="subunit">
    <text evidence="1">Part of the 30S ribosomal subunit. Contacts protein S5. The interaction surface between S4 and S5 is involved in control of translational fidelity (By similarity).</text>
</comment>
<comment type="subcellular location">
    <subcellularLocation>
        <location>Plastid</location>
        <location>Chloroplast</location>
    </subcellularLocation>
</comment>
<comment type="similarity">
    <text evidence="3">Belongs to the universal ribosomal protein uS4 family.</text>
</comment>
<geneLocation type="chloroplast"/>
<dbReference type="EMBL" id="Z29247">
    <property type="protein sequence ID" value="CAA82446.1"/>
    <property type="molecule type" value="Genomic_DNA"/>
</dbReference>
<dbReference type="PIR" id="S41278">
    <property type="entry name" value="S41278"/>
</dbReference>
<dbReference type="SMR" id="P36467"/>
<dbReference type="GO" id="GO:0009507">
    <property type="term" value="C:chloroplast"/>
    <property type="evidence" value="ECO:0007669"/>
    <property type="project" value="UniProtKB-SubCell"/>
</dbReference>
<dbReference type="GO" id="GO:0015935">
    <property type="term" value="C:small ribosomal subunit"/>
    <property type="evidence" value="ECO:0007669"/>
    <property type="project" value="InterPro"/>
</dbReference>
<dbReference type="GO" id="GO:0019843">
    <property type="term" value="F:rRNA binding"/>
    <property type="evidence" value="ECO:0007669"/>
    <property type="project" value="UniProtKB-KW"/>
</dbReference>
<dbReference type="GO" id="GO:0003735">
    <property type="term" value="F:structural constituent of ribosome"/>
    <property type="evidence" value="ECO:0007669"/>
    <property type="project" value="InterPro"/>
</dbReference>
<dbReference type="GO" id="GO:0042274">
    <property type="term" value="P:ribosomal small subunit biogenesis"/>
    <property type="evidence" value="ECO:0007669"/>
    <property type="project" value="TreeGrafter"/>
</dbReference>
<dbReference type="GO" id="GO:0006412">
    <property type="term" value="P:translation"/>
    <property type="evidence" value="ECO:0007669"/>
    <property type="project" value="InterPro"/>
</dbReference>
<dbReference type="CDD" id="cd00165">
    <property type="entry name" value="S4"/>
    <property type="match status" value="1"/>
</dbReference>
<dbReference type="FunFam" id="1.10.1050.10:FF:000002">
    <property type="entry name" value="30S ribosomal protein S4, chloroplastic"/>
    <property type="match status" value="1"/>
</dbReference>
<dbReference type="FunFam" id="3.10.290.10:FF:000081">
    <property type="entry name" value="30S ribosomal protein S4, chloroplastic"/>
    <property type="match status" value="1"/>
</dbReference>
<dbReference type="Gene3D" id="1.10.1050.10">
    <property type="entry name" value="Ribosomal Protein S4 Delta 41, Chain A, domain 1"/>
    <property type="match status" value="1"/>
</dbReference>
<dbReference type="Gene3D" id="3.10.290.10">
    <property type="entry name" value="RNA-binding S4 domain"/>
    <property type="match status" value="1"/>
</dbReference>
<dbReference type="HAMAP" id="MF_01306_B">
    <property type="entry name" value="Ribosomal_uS4_B"/>
    <property type="match status" value="1"/>
</dbReference>
<dbReference type="InterPro" id="IPR022801">
    <property type="entry name" value="Ribosomal_uS4"/>
</dbReference>
<dbReference type="InterPro" id="IPR005709">
    <property type="entry name" value="Ribosomal_uS4_bac-type"/>
</dbReference>
<dbReference type="InterPro" id="IPR018079">
    <property type="entry name" value="Ribosomal_uS4_CS"/>
</dbReference>
<dbReference type="InterPro" id="IPR001912">
    <property type="entry name" value="Ribosomal_uS4_N"/>
</dbReference>
<dbReference type="InterPro" id="IPR002942">
    <property type="entry name" value="S4_RNA-bd"/>
</dbReference>
<dbReference type="InterPro" id="IPR036986">
    <property type="entry name" value="S4_RNA-bd_sf"/>
</dbReference>
<dbReference type="NCBIfam" id="NF003717">
    <property type="entry name" value="PRK05327.1"/>
    <property type="match status" value="1"/>
</dbReference>
<dbReference type="NCBIfam" id="TIGR01017">
    <property type="entry name" value="rpsD_bact"/>
    <property type="match status" value="1"/>
</dbReference>
<dbReference type="PANTHER" id="PTHR11831">
    <property type="entry name" value="30S 40S RIBOSOMAL PROTEIN"/>
    <property type="match status" value="1"/>
</dbReference>
<dbReference type="PANTHER" id="PTHR11831:SF4">
    <property type="entry name" value="SMALL RIBOSOMAL SUBUNIT PROTEIN US4M"/>
    <property type="match status" value="1"/>
</dbReference>
<dbReference type="Pfam" id="PF00163">
    <property type="entry name" value="Ribosomal_S4"/>
    <property type="match status" value="1"/>
</dbReference>
<dbReference type="Pfam" id="PF01479">
    <property type="entry name" value="S4"/>
    <property type="match status" value="1"/>
</dbReference>
<dbReference type="SMART" id="SM01390">
    <property type="entry name" value="Ribosomal_S4"/>
    <property type="match status" value="1"/>
</dbReference>
<dbReference type="SMART" id="SM00363">
    <property type="entry name" value="S4"/>
    <property type="match status" value="1"/>
</dbReference>
<dbReference type="SUPFAM" id="SSF55174">
    <property type="entry name" value="Alpha-L RNA-binding motif"/>
    <property type="match status" value="1"/>
</dbReference>
<dbReference type="PROSITE" id="PS00632">
    <property type="entry name" value="RIBOSOMAL_S4"/>
    <property type="match status" value="1"/>
</dbReference>
<dbReference type="PROSITE" id="PS50889">
    <property type="entry name" value="S4"/>
    <property type="match status" value="1"/>
</dbReference>
<accession>P36467</accession>
<proteinExistence type="inferred from homology"/>
<organism>
    <name type="scientific">Cenchrus longisetus</name>
    <name type="common">Feathertop</name>
    <name type="synonym">Pennisetum villosum</name>
    <dbReference type="NCBI Taxonomy" id="29694"/>
    <lineage>
        <taxon>Eukaryota</taxon>
        <taxon>Viridiplantae</taxon>
        <taxon>Streptophyta</taxon>
        <taxon>Embryophyta</taxon>
        <taxon>Tracheophyta</taxon>
        <taxon>Spermatophyta</taxon>
        <taxon>Magnoliopsida</taxon>
        <taxon>Liliopsida</taxon>
        <taxon>Poales</taxon>
        <taxon>Poaceae</taxon>
        <taxon>PACMAD clade</taxon>
        <taxon>Panicoideae</taxon>
        <taxon>Panicodae</taxon>
        <taxon>Paniceae</taxon>
        <taxon>Cenchrinae</taxon>
        <taxon>Cenchrus</taxon>
    </lineage>
</organism>
<keyword id="KW-0150">Chloroplast</keyword>
<keyword id="KW-0934">Plastid</keyword>
<keyword id="KW-0687">Ribonucleoprotein</keyword>
<keyword id="KW-0689">Ribosomal protein</keyword>
<keyword id="KW-0694">RNA-binding</keyword>
<keyword id="KW-0699">rRNA-binding</keyword>
<feature type="chain" id="PRO_0000132647" description="Small ribosomal subunit protein uS4c">
    <location>
        <begin position="1"/>
        <end position="196" status="greater than"/>
    </location>
</feature>
<feature type="domain" description="S4 RNA-binding">
    <location>
        <begin position="89"/>
        <end position="150"/>
    </location>
</feature>
<feature type="region of interest" description="Disordered" evidence="2">
    <location>
        <begin position="15"/>
        <end position="42"/>
    </location>
</feature>
<feature type="non-terminal residue">
    <location>
        <position position="196"/>
    </location>
</feature>
<protein>
    <recommendedName>
        <fullName evidence="3">Small ribosomal subunit protein uS4c</fullName>
    </recommendedName>
    <alternativeName>
        <fullName>30S ribosomal protein S4, chloroplastic</fullName>
    </alternativeName>
</protein>
<evidence type="ECO:0000250" key="1"/>
<evidence type="ECO:0000256" key="2">
    <source>
        <dbReference type="SAM" id="MobiDB-lite"/>
    </source>
</evidence>
<evidence type="ECO:0000305" key="3"/>
<reference key="1">
    <citation type="journal article" date="1994" name="Plant Syst. Evol.">
        <title>The chloroplast gene rps4 as a tool for the study of Poaceae phylogeny.</title>
        <authorList>
            <person name="Nadot S."/>
            <person name="Bajon R."/>
            <person name="Lejeune B."/>
        </authorList>
        <dbReference type="AGRICOLA" id="IND20417698"/>
    </citation>
    <scope>NUCLEOTIDE SEQUENCE [GENOMIC DNA]</scope>
</reference>
<name>RR4_CENLN</name>
<gene>
    <name type="primary">rps4</name>
</gene>